<feature type="chain" id="PRO_1000024271" description="Biosynthetic arginine decarboxylase">
    <location>
        <begin position="1"/>
        <end position="637"/>
    </location>
</feature>
<feature type="binding site" evidence="1">
    <location>
        <begin position="286"/>
        <end position="296"/>
    </location>
    <ligand>
        <name>substrate</name>
    </ligand>
</feature>
<feature type="modified residue" description="N6-(pyridoxal phosphate)lysine" evidence="1">
    <location>
        <position position="101"/>
    </location>
</feature>
<dbReference type="EC" id="4.1.1.19" evidence="1"/>
<dbReference type="EMBL" id="CP000469">
    <property type="protein sequence ID" value="ABK47857.1"/>
    <property type="molecule type" value="Genomic_DNA"/>
</dbReference>
<dbReference type="RefSeq" id="WP_011716660.1">
    <property type="nucleotide sequence ID" value="NC_008577.1"/>
</dbReference>
<dbReference type="SMR" id="A0KVN8"/>
<dbReference type="STRING" id="94122.Shewana3_1624"/>
<dbReference type="GeneID" id="94727617"/>
<dbReference type="KEGG" id="shn:Shewana3_1624"/>
<dbReference type="eggNOG" id="COG1166">
    <property type="taxonomic scope" value="Bacteria"/>
</dbReference>
<dbReference type="HOGENOM" id="CLU_027243_1_0_6"/>
<dbReference type="OrthoDB" id="9802658at2"/>
<dbReference type="UniPathway" id="UPA00186">
    <property type="reaction ID" value="UER00284"/>
</dbReference>
<dbReference type="Proteomes" id="UP000002589">
    <property type="component" value="Chromosome"/>
</dbReference>
<dbReference type="GO" id="GO:0008792">
    <property type="term" value="F:arginine decarboxylase activity"/>
    <property type="evidence" value="ECO:0007669"/>
    <property type="project" value="UniProtKB-UniRule"/>
</dbReference>
<dbReference type="GO" id="GO:0046872">
    <property type="term" value="F:metal ion binding"/>
    <property type="evidence" value="ECO:0007669"/>
    <property type="project" value="UniProtKB-KW"/>
</dbReference>
<dbReference type="GO" id="GO:0006527">
    <property type="term" value="P:arginine catabolic process"/>
    <property type="evidence" value="ECO:0007669"/>
    <property type="project" value="InterPro"/>
</dbReference>
<dbReference type="GO" id="GO:0033388">
    <property type="term" value="P:putrescine biosynthetic process from arginine"/>
    <property type="evidence" value="ECO:0007669"/>
    <property type="project" value="TreeGrafter"/>
</dbReference>
<dbReference type="GO" id="GO:0008295">
    <property type="term" value="P:spermidine biosynthetic process"/>
    <property type="evidence" value="ECO:0007669"/>
    <property type="project" value="UniProtKB-UniRule"/>
</dbReference>
<dbReference type="CDD" id="cd06830">
    <property type="entry name" value="PLPDE_III_ADC"/>
    <property type="match status" value="1"/>
</dbReference>
<dbReference type="FunFam" id="1.10.287.3440:FF:000001">
    <property type="entry name" value="Biosynthetic arginine decarboxylase"/>
    <property type="match status" value="1"/>
</dbReference>
<dbReference type="FunFam" id="1.20.58.930:FF:000001">
    <property type="entry name" value="Biosynthetic arginine decarboxylase"/>
    <property type="match status" value="1"/>
</dbReference>
<dbReference type="FunFam" id="2.40.37.10:FF:000001">
    <property type="entry name" value="Biosynthetic arginine decarboxylase"/>
    <property type="match status" value="1"/>
</dbReference>
<dbReference type="FunFam" id="3.20.20.10:FF:000001">
    <property type="entry name" value="Biosynthetic arginine decarboxylase"/>
    <property type="match status" value="1"/>
</dbReference>
<dbReference type="Gene3D" id="1.10.287.3440">
    <property type="match status" value="1"/>
</dbReference>
<dbReference type="Gene3D" id="1.20.58.930">
    <property type="match status" value="1"/>
</dbReference>
<dbReference type="Gene3D" id="3.20.20.10">
    <property type="entry name" value="Alanine racemase"/>
    <property type="match status" value="1"/>
</dbReference>
<dbReference type="Gene3D" id="2.40.37.10">
    <property type="entry name" value="Lyase, Ornithine Decarboxylase, Chain A, domain 1"/>
    <property type="match status" value="1"/>
</dbReference>
<dbReference type="HAMAP" id="MF_01417">
    <property type="entry name" value="SpeA"/>
    <property type="match status" value="1"/>
</dbReference>
<dbReference type="InterPro" id="IPR009006">
    <property type="entry name" value="Ala_racemase/Decarboxylase_C"/>
</dbReference>
<dbReference type="InterPro" id="IPR040634">
    <property type="entry name" value="Arg_decarb_HB"/>
</dbReference>
<dbReference type="InterPro" id="IPR041128">
    <property type="entry name" value="Arg_decarbox_C"/>
</dbReference>
<dbReference type="InterPro" id="IPR002985">
    <property type="entry name" value="Arg_decrbxlase"/>
</dbReference>
<dbReference type="InterPro" id="IPR022644">
    <property type="entry name" value="De-COase2_N"/>
</dbReference>
<dbReference type="InterPro" id="IPR000183">
    <property type="entry name" value="Orn/DAP/Arg_de-COase"/>
</dbReference>
<dbReference type="InterPro" id="IPR029066">
    <property type="entry name" value="PLP-binding_barrel"/>
</dbReference>
<dbReference type="NCBIfam" id="NF003763">
    <property type="entry name" value="PRK05354.1"/>
    <property type="match status" value="1"/>
</dbReference>
<dbReference type="NCBIfam" id="TIGR01273">
    <property type="entry name" value="speA"/>
    <property type="match status" value="1"/>
</dbReference>
<dbReference type="PANTHER" id="PTHR43295">
    <property type="entry name" value="ARGININE DECARBOXYLASE"/>
    <property type="match status" value="1"/>
</dbReference>
<dbReference type="PANTHER" id="PTHR43295:SF9">
    <property type="entry name" value="BIOSYNTHETIC ARGININE DECARBOXYLASE"/>
    <property type="match status" value="1"/>
</dbReference>
<dbReference type="Pfam" id="PF17810">
    <property type="entry name" value="Arg_decarb_HB"/>
    <property type="match status" value="1"/>
</dbReference>
<dbReference type="Pfam" id="PF17944">
    <property type="entry name" value="Arg_decarbox_C"/>
    <property type="match status" value="1"/>
</dbReference>
<dbReference type="Pfam" id="PF02784">
    <property type="entry name" value="Orn_Arg_deC_N"/>
    <property type="match status" value="1"/>
</dbReference>
<dbReference type="PIRSF" id="PIRSF001336">
    <property type="entry name" value="Arg_decrbxlase"/>
    <property type="match status" value="1"/>
</dbReference>
<dbReference type="PRINTS" id="PR01180">
    <property type="entry name" value="ARGDCRBXLASE"/>
</dbReference>
<dbReference type="PRINTS" id="PR01179">
    <property type="entry name" value="ODADCRBXLASE"/>
</dbReference>
<dbReference type="SUPFAM" id="SSF51419">
    <property type="entry name" value="PLP-binding barrel"/>
    <property type="match status" value="1"/>
</dbReference>
<gene>
    <name evidence="1" type="primary">speA</name>
    <name type="ordered locus">Shewana3_1624</name>
</gene>
<proteinExistence type="inferred from homology"/>
<protein>
    <recommendedName>
        <fullName evidence="1">Biosynthetic arginine decarboxylase</fullName>
        <shortName evidence="1">ADC</shortName>
        <ecNumber evidence="1">4.1.1.19</ecNumber>
    </recommendedName>
</protein>
<name>SPEA_SHESA</name>
<evidence type="ECO:0000255" key="1">
    <source>
        <dbReference type="HAMAP-Rule" id="MF_01417"/>
    </source>
</evidence>
<accession>A0KVN8</accession>
<sequence>MNDWSIDAARAGYNVTHWSQGFYGISDQGEVTVSPDPKNPDHKIGLNELAKDMVKAGVALPVLVRFPQILHHRVNSLCQAFDQAIQKYEYQADYLLVYPIKVNQQKTVVEEILASQASKEVPQLGLEAGSKPELMAVLAMAQKASSVIVCNGYKDNEYIRLALIGEKLGHKVYIVLEKLSELKMVLAESKRLGVKPRLGLRARLAFQGKGKWQASGGEKSKFGLSAAQILTVVDQLKQEDMLDSLQLLHFHLGSQIANIRDIRQGVSEAARFYCELRELGASINCFDVGGGLAVDYDGTRSQSNNSMNYGLSEYANNIVNVLTDICNEYEQPMPRIISESGRHLTAHHAVLITDVIGTEAYQVEEIQPPAEESPQLLHNMWQSWTEISGRADQRALIEIYHDSQSDLQEAQSLFALGQLSLAERAWAEQANLRVCHEVQGLLSTKNRYHRPIIDELNEKLADKFFVNFSLFQSLPDAWGIDQVFPVLPLSGLDKAPERRAVMLDITCDSDGIVDQYVDGQGIETTLPVPAWSAESPYLMGFFMVGAYQEILGDMHNLFGDTNSAVVSIEENGMTNIESVLAGDTVADVLRYVNLDAVDFMRTYEELVNQHIAEEERAQILEELQVGLKGYTYLEDFS</sequence>
<organism>
    <name type="scientific">Shewanella sp. (strain ANA-3)</name>
    <dbReference type="NCBI Taxonomy" id="94122"/>
    <lineage>
        <taxon>Bacteria</taxon>
        <taxon>Pseudomonadati</taxon>
        <taxon>Pseudomonadota</taxon>
        <taxon>Gammaproteobacteria</taxon>
        <taxon>Alteromonadales</taxon>
        <taxon>Shewanellaceae</taxon>
        <taxon>Shewanella</taxon>
    </lineage>
</organism>
<keyword id="KW-0210">Decarboxylase</keyword>
<keyword id="KW-0456">Lyase</keyword>
<keyword id="KW-0460">Magnesium</keyword>
<keyword id="KW-0479">Metal-binding</keyword>
<keyword id="KW-0620">Polyamine biosynthesis</keyword>
<keyword id="KW-0663">Pyridoxal phosphate</keyword>
<keyword id="KW-0745">Spermidine biosynthesis</keyword>
<reference key="1">
    <citation type="submission" date="2006-09" db="EMBL/GenBank/DDBJ databases">
        <title>Complete sequence of chromosome 1 of Shewanella sp. ANA-3.</title>
        <authorList>
            <person name="Copeland A."/>
            <person name="Lucas S."/>
            <person name="Lapidus A."/>
            <person name="Barry K."/>
            <person name="Detter J.C."/>
            <person name="Glavina del Rio T."/>
            <person name="Hammon N."/>
            <person name="Israni S."/>
            <person name="Dalin E."/>
            <person name="Tice H."/>
            <person name="Pitluck S."/>
            <person name="Chertkov O."/>
            <person name="Brettin T."/>
            <person name="Bruce D."/>
            <person name="Han C."/>
            <person name="Tapia R."/>
            <person name="Gilna P."/>
            <person name="Schmutz J."/>
            <person name="Larimer F."/>
            <person name="Land M."/>
            <person name="Hauser L."/>
            <person name="Kyrpides N."/>
            <person name="Kim E."/>
            <person name="Newman D."/>
            <person name="Salticov C."/>
            <person name="Konstantinidis K."/>
            <person name="Klappenback J."/>
            <person name="Tiedje J."/>
            <person name="Richardson P."/>
        </authorList>
    </citation>
    <scope>NUCLEOTIDE SEQUENCE [LARGE SCALE GENOMIC DNA]</scope>
    <source>
        <strain>ANA-3</strain>
    </source>
</reference>
<comment type="function">
    <text evidence="1">Catalyzes the biosynthesis of agmatine from arginine.</text>
</comment>
<comment type="catalytic activity">
    <reaction evidence="1">
        <text>L-arginine + H(+) = agmatine + CO2</text>
        <dbReference type="Rhea" id="RHEA:17641"/>
        <dbReference type="ChEBI" id="CHEBI:15378"/>
        <dbReference type="ChEBI" id="CHEBI:16526"/>
        <dbReference type="ChEBI" id="CHEBI:32682"/>
        <dbReference type="ChEBI" id="CHEBI:58145"/>
        <dbReference type="EC" id="4.1.1.19"/>
    </reaction>
</comment>
<comment type="cofactor">
    <cofactor evidence="1">
        <name>Mg(2+)</name>
        <dbReference type="ChEBI" id="CHEBI:18420"/>
    </cofactor>
</comment>
<comment type="cofactor">
    <cofactor evidence="1">
        <name>pyridoxal 5'-phosphate</name>
        <dbReference type="ChEBI" id="CHEBI:597326"/>
    </cofactor>
</comment>
<comment type="pathway">
    <text evidence="1">Amine and polyamine biosynthesis; agmatine biosynthesis; agmatine from L-arginine: step 1/1.</text>
</comment>
<comment type="similarity">
    <text evidence="1">Belongs to the Orn/Lys/Arg decarboxylase class-II family. SpeA subfamily.</text>
</comment>